<dbReference type="EC" id="2.6.1.9" evidence="1"/>
<dbReference type="EMBL" id="CP000010">
    <property type="protein sequence ID" value="AAU48281.1"/>
    <property type="molecule type" value="Genomic_DNA"/>
</dbReference>
<dbReference type="RefSeq" id="YP_104234.1">
    <property type="nucleotide sequence ID" value="NC_006348.1"/>
</dbReference>
<dbReference type="SMR" id="Q62GE0"/>
<dbReference type="KEGG" id="bma:BMA2713"/>
<dbReference type="PATRIC" id="fig|243160.12.peg.2783"/>
<dbReference type="eggNOG" id="COG0079">
    <property type="taxonomic scope" value="Bacteria"/>
</dbReference>
<dbReference type="HOGENOM" id="CLU_017584_3_1_4"/>
<dbReference type="UniPathway" id="UPA00031">
    <property type="reaction ID" value="UER00012"/>
</dbReference>
<dbReference type="Proteomes" id="UP000006693">
    <property type="component" value="Chromosome 1"/>
</dbReference>
<dbReference type="GO" id="GO:0004400">
    <property type="term" value="F:histidinol-phosphate transaminase activity"/>
    <property type="evidence" value="ECO:0007669"/>
    <property type="project" value="UniProtKB-UniRule"/>
</dbReference>
<dbReference type="GO" id="GO:0030170">
    <property type="term" value="F:pyridoxal phosphate binding"/>
    <property type="evidence" value="ECO:0007669"/>
    <property type="project" value="InterPro"/>
</dbReference>
<dbReference type="GO" id="GO:0000105">
    <property type="term" value="P:L-histidine biosynthetic process"/>
    <property type="evidence" value="ECO:0007669"/>
    <property type="project" value="UniProtKB-UniRule"/>
</dbReference>
<dbReference type="CDD" id="cd00609">
    <property type="entry name" value="AAT_like"/>
    <property type="match status" value="1"/>
</dbReference>
<dbReference type="Gene3D" id="3.90.1150.10">
    <property type="entry name" value="Aspartate Aminotransferase, domain 1"/>
    <property type="match status" value="1"/>
</dbReference>
<dbReference type="Gene3D" id="3.40.640.10">
    <property type="entry name" value="Type I PLP-dependent aspartate aminotransferase-like (Major domain)"/>
    <property type="match status" value="1"/>
</dbReference>
<dbReference type="HAMAP" id="MF_01023">
    <property type="entry name" value="HisC_aminotrans_2"/>
    <property type="match status" value="1"/>
</dbReference>
<dbReference type="InterPro" id="IPR004839">
    <property type="entry name" value="Aminotransferase_I/II_large"/>
</dbReference>
<dbReference type="InterPro" id="IPR005861">
    <property type="entry name" value="HisP_aminotrans"/>
</dbReference>
<dbReference type="InterPro" id="IPR050106">
    <property type="entry name" value="HistidinolP_aminotransfase"/>
</dbReference>
<dbReference type="InterPro" id="IPR015424">
    <property type="entry name" value="PyrdxlP-dep_Trfase"/>
</dbReference>
<dbReference type="InterPro" id="IPR015421">
    <property type="entry name" value="PyrdxlP-dep_Trfase_major"/>
</dbReference>
<dbReference type="InterPro" id="IPR015422">
    <property type="entry name" value="PyrdxlP-dep_Trfase_small"/>
</dbReference>
<dbReference type="NCBIfam" id="TIGR01141">
    <property type="entry name" value="hisC"/>
    <property type="match status" value="1"/>
</dbReference>
<dbReference type="PANTHER" id="PTHR43643:SF6">
    <property type="entry name" value="HISTIDINOL-PHOSPHATE AMINOTRANSFERASE"/>
    <property type="match status" value="1"/>
</dbReference>
<dbReference type="PANTHER" id="PTHR43643">
    <property type="entry name" value="HISTIDINOL-PHOSPHATE AMINOTRANSFERASE 2"/>
    <property type="match status" value="1"/>
</dbReference>
<dbReference type="Pfam" id="PF00155">
    <property type="entry name" value="Aminotran_1_2"/>
    <property type="match status" value="1"/>
</dbReference>
<dbReference type="SUPFAM" id="SSF53383">
    <property type="entry name" value="PLP-dependent transferases"/>
    <property type="match status" value="1"/>
</dbReference>
<accession>Q62GE0</accession>
<reference key="1">
    <citation type="journal article" date="2004" name="Proc. Natl. Acad. Sci. U.S.A.">
        <title>Structural flexibility in the Burkholderia mallei genome.</title>
        <authorList>
            <person name="Nierman W.C."/>
            <person name="DeShazer D."/>
            <person name="Kim H.S."/>
            <person name="Tettelin H."/>
            <person name="Nelson K.E."/>
            <person name="Feldblyum T.V."/>
            <person name="Ulrich R.L."/>
            <person name="Ronning C.M."/>
            <person name="Brinkac L.M."/>
            <person name="Daugherty S.C."/>
            <person name="Davidsen T.D."/>
            <person name="DeBoy R.T."/>
            <person name="Dimitrov G."/>
            <person name="Dodson R.J."/>
            <person name="Durkin A.S."/>
            <person name="Gwinn M.L."/>
            <person name="Haft D.H."/>
            <person name="Khouri H.M."/>
            <person name="Kolonay J.F."/>
            <person name="Madupu R."/>
            <person name="Mohammoud Y."/>
            <person name="Nelson W.C."/>
            <person name="Radune D."/>
            <person name="Romero C.M."/>
            <person name="Sarria S."/>
            <person name="Selengut J."/>
            <person name="Shamblin C."/>
            <person name="Sullivan S.A."/>
            <person name="White O."/>
            <person name="Yu Y."/>
            <person name="Zafar N."/>
            <person name="Zhou L."/>
            <person name="Fraser C.M."/>
        </authorList>
    </citation>
    <scope>NUCLEOTIDE SEQUENCE [LARGE SCALE GENOMIC DNA]</scope>
    <source>
        <strain>ATCC 23344</strain>
    </source>
</reference>
<sequence>MTTPEDIIRRDVLAMTGYPVPDATGFVKLDAMENPYSLPAPLAAELGERLAHVALNRYPAPRPAALIDRLRAVTGVPAACDVLLGNGSDEIISMLAMACAKPGAKVLAPVPGFVMYELSAKFAQLEFVGVPLRADLTLDIDAMLAALAEHRPALVYLAYPNNPTGTLYPDEDVERIIAAAAASLVVIDEAYQPFAQRSWLPRAAQFDNVVVMRTMSKLGLAGIRLGYLVGLPAWLVQFDKVRPPYNVNVLTQAAAEFLLERVDVLDAQAAQLRDARTALAHAIGALPGATVFPSAGNFLLVRVPDAAAVFDVLLTERVLIKNVSKMHPLLANCVRVTVGSPEENARLLAALKLALP</sequence>
<organism>
    <name type="scientific">Burkholderia mallei (strain ATCC 23344)</name>
    <dbReference type="NCBI Taxonomy" id="243160"/>
    <lineage>
        <taxon>Bacteria</taxon>
        <taxon>Pseudomonadati</taxon>
        <taxon>Pseudomonadota</taxon>
        <taxon>Betaproteobacteria</taxon>
        <taxon>Burkholderiales</taxon>
        <taxon>Burkholderiaceae</taxon>
        <taxon>Burkholderia</taxon>
        <taxon>pseudomallei group</taxon>
    </lineage>
</organism>
<keyword id="KW-0028">Amino-acid biosynthesis</keyword>
<keyword id="KW-0032">Aminotransferase</keyword>
<keyword id="KW-0368">Histidine biosynthesis</keyword>
<keyword id="KW-0663">Pyridoxal phosphate</keyword>
<keyword id="KW-1185">Reference proteome</keyword>
<keyword id="KW-0808">Transferase</keyword>
<protein>
    <recommendedName>
        <fullName evidence="1">Histidinol-phosphate aminotransferase 1</fullName>
        <ecNumber evidence="1">2.6.1.9</ecNumber>
    </recommendedName>
    <alternativeName>
        <fullName evidence="1">Imidazole acetol-phosphate transaminase 1</fullName>
    </alternativeName>
</protein>
<evidence type="ECO:0000255" key="1">
    <source>
        <dbReference type="HAMAP-Rule" id="MF_01023"/>
    </source>
</evidence>
<name>HIS81_BURMA</name>
<gene>
    <name evidence="1" type="primary">hisC1</name>
    <name type="synonym">hisC-1</name>
    <name type="ordered locus">BMA2713</name>
</gene>
<proteinExistence type="inferred from homology"/>
<feature type="chain" id="PRO_0000153335" description="Histidinol-phosphate aminotransferase 1">
    <location>
        <begin position="1"/>
        <end position="356"/>
    </location>
</feature>
<feature type="modified residue" description="N6-(pyridoxal phosphate)lysine" evidence="1">
    <location>
        <position position="217"/>
    </location>
</feature>
<comment type="catalytic activity">
    <reaction evidence="1">
        <text>L-histidinol phosphate + 2-oxoglutarate = 3-(imidazol-4-yl)-2-oxopropyl phosphate + L-glutamate</text>
        <dbReference type="Rhea" id="RHEA:23744"/>
        <dbReference type="ChEBI" id="CHEBI:16810"/>
        <dbReference type="ChEBI" id="CHEBI:29985"/>
        <dbReference type="ChEBI" id="CHEBI:57766"/>
        <dbReference type="ChEBI" id="CHEBI:57980"/>
        <dbReference type="EC" id="2.6.1.9"/>
    </reaction>
</comment>
<comment type="cofactor">
    <cofactor evidence="1">
        <name>pyridoxal 5'-phosphate</name>
        <dbReference type="ChEBI" id="CHEBI:597326"/>
    </cofactor>
</comment>
<comment type="pathway">
    <text evidence="1">Amino-acid biosynthesis; L-histidine biosynthesis; L-histidine from 5-phospho-alpha-D-ribose 1-diphosphate: step 7/9.</text>
</comment>
<comment type="subunit">
    <text evidence="1">Homodimer.</text>
</comment>
<comment type="similarity">
    <text evidence="1">Belongs to the class-II pyridoxal-phosphate-dependent aminotransferase family. Histidinol-phosphate aminotransferase subfamily.</text>
</comment>